<gene>
    <name evidence="1" type="primary">tig</name>
    <name type="ordered locus">BAD_0988</name>
</gene>
<organism>
    <name type="scientific">Bifidobacterium adolescentis (strain ATCC 15703 / DSM 20083 / NCTC 11814 / E194a)</name>
    <dbReference type="NCBI Taxonomy" id="367928"/>
    <lineage>
        <taxon>Bacteria</taxon>
        <taxon>Bacillati</taxon>
        <taxon>Actinomycetota</taxon>
        <taxon>Actinomycetes</taxon>
        <taxon>Bifidobacteriales</taxon>
        <taxon>Bifidobacteriaceae</taxon>
        <taxon>Bifidobacterium</taxon>
    </lineage>
</organism>
<comment type="function">
    <text evidence="1">Involved in protein export. Acts as a chaperone by maintaining the newly synthesized protein in an open conformation. Functions as a peptidyl-prolyl cis-trans isomerase.</text>
</comment>
<comment type="catalytic activity">
    <reaction evidence="1">
        <text>[protein]-peptidylproline (omega=180) = [protein]-peptidylproline (omega=0)</text>
        <dbReference type="Rhea" id="RHEA:16237"/>
        <dbReference type="Rhea" id="RHEA-COMP:10747"/>
        <dbReference type="Rhea" id="RHEA-COMP:10748"/>
        <dbReference type="ChEBI" id="CHEBI:83833"/>
        <dbReference type="ChEBI" id="CHEBI:83834"/>
        <dbReference type="EC" id="5.2.1.8"/>
    </reaction>
</comment>
<comment type="subcellular location">
    <subcellularLocation>
        <location>Cytoplasm</location>
    </subcellularLocation>
    <text evidence="1">About half TF is bound to the ribosome near the polypeptide exit tunnel while the other half is free in the cytoplasm.</text>
</comment>
<comment type="domain">
    <text evidence="1">Consists of 3 domains; the N-terminus binds the ribosome, the middle domain has PPIase activity, while the C-terminus has intrinsic chaperone activity on its own.</text>
</comment>
<comment type="similarity">
    <text evidence="1">Belongs to the FKBP-type PPIase family. Tig subfamily.</text>
</comment>
<keyword id="KW-0131">Cell cycle</keyword>
<keyword id="KW-0132">Cell division</keyword>
<keyword id="KW-0143">Chaperone</keyword>
<keyword id="KW-0963">Cytoplasm</keyword>
<keyword id="KW-0413">Isomerase</keyword>
<keyword id="KW-1185">Reference proteome</keyword>
<keyword id="KW-0697">Rotamase</keyword>
<reference key="1">
    <citation type="submission" date="2006-12" db="EMBL/GenBank/DDBJ databases">
        <title>Bifidobacterium adolescentis complete genome sequence.</title>
        <authorList>
            <person name="Suzuki T."/>
            <person name="Tsuda Y."/>
            <person name="Kanou N."/>
            <person name="Inoue T."/>
            <person name="Kumazaki K."/>
            <person name="Nagano S."/>
            <person name="Hirai S."/>
            <person name="Tanaka K."/>
            <person name="Watanabe K."/>
        </authorList>
    </citation>
    <scope>NUCLEOTIDE SEQUENCE [LARGE SCALE GENOMIC DNA]</scope>
    <source>
        <strain>ATCC 15703 / DSM 20083 / NCTC 11814 / E194a</strain>
    </source>
</reference>
<dbReference type="EC" id="5.2.1.8" evidence="1"/>
<dbReference type="EMBL" id="AP009256">
    <property type="protein sequence ID" value="BAF39769.1"/>
    <property type="molecule type" value="Genomic_DNA"/>
</dbReference>
<dbReference type="RefSeq" id="WP_011743352.1">
    <property type="nucleotide sequence ID" value="NC_008618.1"/>
</dbReference>
<dbReference type="SMR" id="A1A236"/>
<dbReference type="STRING" id="367928.BAD_0988"/>
<dbReference type="PaxDb" id="1680-BADO_1040"/>
<dbReference type="GeneID" id="4557650"/>
<dbReference type="KEGG" id="bad:BAD_0988"/>
<dbReference type="HOGENOM" id="CLU_033058_3_0_11"/>
<dbReference type="Proteomes" id="UP000008702">
    <property type="component" value="Chromosome"/>
</dbReference>
<dbReference type="GO" id="GO:0005737">
    <property type="term" value="C:cytoplasm"/>
    <property type="evidence" value="ECO:0007669"/>
    <property type="project" value="UniProtKB-SubCell"/>
</dbReference>
<dbReference type="GO" id="GO:0003755">
    <property type="term" value="F:peptidyl-prolyl cis-trans isomerase activity"/>
    <property type="evidence" value="ECO:0007669"/>
    <property type="project" value="UniProtKB-UniRule"/>
</dbReference>
<dbReference type="GO" id="GO:0044183">
    <property type="term" value="F:protein folding chaperone"/>
    <property type="evidence" value="ECO:0007669"/>
    <property type="project" value="TreeGrafter"/>
</dbReference>
<dbReference type="GO" id="GO:0043022">
    <property type="term" value="F:ribosome binding"/>
    <property type="evidence" value="ECO:0007669"/>
    <property type="project" value="TreeGrafter"/>
</dbReference>
<dbReference type="GO" id="GO:0051083">
    <property type="term" value="P:'de novo' cotranslational protein folding"/>
    <property type="evidence" value="ECO:0007669"/>
    <property type="project" value="TreeGrafter"/>
</dbReference>
<dbReference type="GO" id="GO:0051301">
    <property type="term" value="P:cell division"/>
    <property type="evidence" value="ECO:0007669"/>
    <property type="project" value="UniProtKB-KW"/>
</dbReference>
<dbReference type="GO" id="GO:0061077">
    <property type="term" value="P:chaperone-mediated protein folding"/>
    <property type="evidence" value="ECO:0007669"/>
    <property type="project" value="TreeGrafter"/>
</dbReference>
<dbReference type="GO" id="GO:0015031">
    <property type="term" value="P:protein transport"/>
    <property type="evidence" value="ECO:0007669"/>
    <property type="project" value="UniProtKB-UniRule"/>
</dbReference>
<dbReference type="GO" id="GO:0043335">
    <property type="term" value="P:protein unfolding"/>
    <property type="evidence" value="ECO:0007669"/>
    <property type="project" value="TreeGrafter"/>
</dbReference>
<dbReference type="Gene3D" id="3.10.50.40">
    <property type="match status" value="1"/>
</dbReference>
<dbReference type="Gene3D" id="3.30.70.1050">
    <property type="entry name" value="Trigger factor ribosome-binding domain"/>
    <property type="match status" value="1"/>
</dbReference>
<dbReference type="Gene3D" id="1.10.3120.10">
    <property type="entry name" value="Trigger factor, C-terminal domain"/>
    <property type="match status" value="1"/>
</dbReference>
<dbReference type="HAMAP" id="MF_00303">
    <property type="entry name" value="Trigger_factor_Tig"/>
    <property type="match status" value="1"/>
</dbReference>
<dbReference type="InterPro" id="IPR046357">
    <property type="entry name" value="PPIase_dom_sf"/>
</dbReference>
<dbReference type="InterPro" id="IPR001179">
    <property type="entry name" value="PPIase_FKBP_dom"/>
</dbReference>
<dbReference type="InterPro" id="IPR005215">
    <property type="entry name" value="Trig_fac"/>
</dbReference>
<dbReference type="InterPro" id="IPR008880">
    <property type="entry name" value="Trigger_fac_C"/>
</dbReference>
<dbReference type="InterPro" id="IPR037041">
    <property type="entry name" value="Trigger_fac_C_sf"/>
</dbReference>
<dbReference type="InterPro" id="IPR008881">
    <property type="entry name" value="Trigger_fac_ribosome-bd_bac"/>
</dbReference>
<dbReference type="InterPro" id="IPR036611">
    <property type="entry name" value="Trigger_fac_ribosome-bd_sf"/>
</dbReference>
<dbReference type="InterPro" id="IPR027304">
    <property type="entry name" value="Trigger_fact/SurA_dom_sf"/>
</dbReference>
<dbReference type="NCBIfam" id="TIGR00115">
    <property type="entry name" value="tig"/>
    <property type="match status" value="1"/>
</dbReference>
<dbReference type="PANTHER" id="PTHR30560">
    <property type="entry name" value="TRIGGER FACTOR CHAPERONE AND PEPTIDYL-PROLYL CIS/TRANS ISOMERASE"/>
    <property type="match status" value="1"/>
</dbReference>
<dbReference type="PANTHER" id="PTHR30560:SF3">
    <property type="entry name" value="TRIGGER FACTOR-LIKE PROTEIN TIG, CHLOROPLASTIC"/>
    <property type="match status" value="1"/>
</dbReference>
<dbReference type="Pfam" id="PF00254">
    <property type="entry name" value="FKBP_C"/>
    <property type="match status" value="1"/>
</dbReference>
<dbReference type="Pfam" id="PF05698">
    <property type="entry name" value="Trigger_C"/>
    <property type="match status" value="1"/>
</dbReference>
<dbReference type="Pfam" id="PF05697">
    <property type="entry name" value="Trigger_N"/>
    <property type="match status" value="1"/>
</dbReference>
<dbReference type="PIRSF" id="PIRSF003095">
    <property type="entry name" value="Trigger_factor"/>
    <property type="match status" value="1"/>
</dbReference>
<dbReference type="SUPFAM" id="SSF54534">
    <property type="entry name" value="FKBP-like"/>
    <property type="match status" value="1"/>
</dbReference>
<dbReference type="SUPFAM" id="SSF109998">
    <property type="entry name" value="Triger factor/SurA peptide-binding domain-like"/>
    <property type="match status" value="1"/>
</dbReference>
<dbReference type="SUPFAM" id="SSF102735">
    <property type="entry name" value="Trigger factor ribosome-binding domain"/>
    <property type="match status" value="1"/>
</dbReference>
<dbReference type="PROSITE" id="PS50059">
    <property type="entry name" value="FKBP_PPIASE"/>
    <property type="match status" value="1"/>
</dbReference>
<protein>
    <recommendedName>
        <fullName evidence="1">Trigger factor</fullName>
        <shortName evidence="1">TF</shortName>
        <ecNumber evidence="1">5.2.1.8</ecNumber>
    </recommendedName>
    <alternativeName>
        <fullName evidence="1">PPIase</fullName>
    </alternativeName>
</protein>
<accession>A1A236</accession>
<feature type="chain" id="PRO_1000022647" description="Trigger factor">
    <location>
        <begin position="1"/>
        <end position="456"/>
    </location>
</feature>
<feature type="domain" description="PPIase FKBP-type" evidence="1">
    <location>
        <begin position="166"/>
        <end position="245"/>
    </location>
</feature>
<evidence type="ECO:0000255" key="1">
    <source>
        <dbReference type="HAMAP-Rule" id="MF_00303"/>
    </source>
</evidence>
<sequence length="456" mass="49265">MKISVRNLEPTKVKLTVTVDPEEFNPYLDEARKEIAKQVNVPGFRKGHVPGKIIDQRIGFGAVAGEAVNNGVPELYSKALETKKIHPMAQPEIDVQDVPESAKDETKLKFVATVERRPDIELPALDGMEIEVAKAEVTDEDINNRLEALRQRFGTLVSVDRPAAKGDYANIDLNAEINGETVDSQEGVSYELGSATMLDGLDEALEGLSAGEETSFEGTLEAGKHEGEKALIKVKVNSVKAEELPELDDDFASEASEFDTLDELKEDLKKVAAQDAESRQATAARDAFIAKLEDGLEIPVPKGVKAEMVEQQLKNVTADPSKATKEQKAEAEETVEKELRDQMVLDVLAETMDVKVSQGEVFNFLASIAQQYGMDPNAFIQAIIRNGQIGSAVQEVGRSKGLLSGMRAVTFKSEGETLDLSAFLGEAAEDEESESVEAASAAAAVADSLAADKDAE</sequence>
<name>TIG_BIFAA</name>
<proteinExistence type="inferred from homology"/>